<evidence type="ECO:0000250" key="1"/>
<evidence type="ECO:0000256" key="2">
    <source>
        <dbReference type="SAM" id="MobiDB-lite"/>
    </source>
</evidence>
<evidence type="ECO:0000305" key="3"/>
<organism>
    <name type="scientific">Dictyostelium discoideum</name>
    <name type="common">Social amoeba</name>
    <dbReference type="NCBI Taxonomy" id="44689"/>
    <lineage>
        <taxon>Eukaryota</taxon>
        <taxon>Amoebozoa</taxon>
        <taxon>Evosea</taxon>
        <taxon>Eumycetozoa</taxon>
        <taxon>Dictyostelia</taxon>
        <taxon>Dictyosteliales</taxon>
        <taxon>Dictyosteliaceae</taxon>
        <taxon>Dictyostelium</taxon>
    </lineage>
</organism>
<accession>Q54S79</accession>
<sequence>MVKAYLKFVQDKVFGLISTSNSILDGSGKLAITGCGERISIWDLRKQVLNQSLYEEDIKAEVTNVCLSKDGALLASGYSDGSIRIWSMSDYQLQAVFNGHRGSVTTMTFNRLGNILVSGSKDTEVIVWDIITESGLFRLRGHRDQITSVKLLERSNHLITSSKDGFIKIWDTETQHCIQTIVGHRNPIWGIDVNPDETRLCSCTSDNQIRFWRIPSNERQREDGSGIEPKFIVNTPINSAVIIPDEINEDGSKKENSNNSNNNDIDDLEIISEEEFAKYYGSITVKAESVSGVRFDPTNKILAVQSTGKFVDLFKITHYDTMKLEEISIVEEMRHRQTIKTSSKVRFFSFGNDIKHWNKFVITLAGNSLEAYEIKEKEQGGGAFEVSSTLDQAGHRSDIRSLSLSSNDQMLVSTSSESVKVWNMKSLSCIRSIACDYGLCTVFAPGNLHVIVGTKTGTIEVFELASAARVASIKAHEGSVWSLVLTPDLRGVTSGGADKLVKFWDFELIASQENSKHKVLNLSLTKTLKVESDVLALKYSADNKFLAVSLLDNTVKIFYTDTVKFHLSLYGHKLPVMCLDISDDSTLIITGSADKNIKIWGLDYGDCHKSFFAHDDSIMQVSFIPSTHHFISASKDKRIKYWDADKFEHIQTIEAHHGEVWSLAMGSVGDFFISGSHDRSIRIFNQTETPIFVESDRQREMEQTWEATLEDDTRMRTKEMLEENAAAGKQTLETIMAGEDILDAIELCVQEKFKIDEYEKLLKTTKNQDEIPLYQPNIIMLGLSPSEYLWNRINRIRPSDLEEALRVLPFSVMRTLFEYFNLWVDQSGKSVEFIFKCSFFLIQTHQNQLSVSTEFIPILQHLNTSIKNRLQKERFTLGFNRSALSFVKREIEINQQYKFFDSDLYLNKNNKNNKDKDSNNNKKDNKKDNKKDNEKSLKRNRK</sequence>
<proteinExistence type="inferred from homology"/>
<protein>
    <recommendedName>
        <fullName>WD repeat-containing protein 3 homolog</fullName>
    </recommendedName>
</protein>
<gene>
    <name type="primary">wdr3</name>
    <name type="ORF">DDB_G0282623</name>
</gene>
<keyword id="KW-0539">Nucleus</keyword>
<keyword id="KW-1185">Reference proteome</keyword>
<keyword id="KW-0677">Repeat</keyword>
<keyword id="KW-0853">WD repeat</keyword>
<dbReference type="EMBL" id="AAFI02000047">
    <property type="protein sequence ID" value="EAL66171.1"/>
    <property type="molecule type" value="Genomic_DNA"/>
</dbReference>
<dbReference type="RefSeq" id="XP_640160.1">
    <property type="nucleotide sequence ID" value="XM_635068.1"/>
</dbReference>
<dbReference type="SMR" id="Q54S79"/>
<dbReference type="FunCoup" id="Q54S79">
    <property type="interactions" value="1106"/>
</dbReference>
<dbReference type="STRING" id="44689.Q54S79"/>
<dbReference type="PaxDb" id="44689-DDB0233973"/>
<dbReference type="EnsemblProtists" id="EAL66171">
    <property type="protein sequence ID" value="EAL66171"/>
    <property type="gene ID" value="DDB_G0282623"/>
</dbReference>
<dbReference type="GeneID" id="8623698"/>
<dbReference type="KEGG" id="ddi:DDB_G0282623"/>
<dbReference type="dictyBase" id="DDB_G0282623">
    <property type="gene designation" value="wdr3"/>
</dbReference>
<dbReference type="VEuPathDB" id="AmoebaDB:DDB_G0282623"/>
<dbReference type="eggNOG" id="KOG0306">
    <property type="taxonomic scope" value="Eukaryota"/>
</dbReference>
<dbReference type="HOGENOM" id="CLU_005318_0_1_1"/>
<dbReference type="InParanoid" id="Q54S79"/>
<dbReference type="OMA" id="MNIPLTC"/>
<dbReference type="PhylomeDB" id="Q54S79"/>
<dbReference type="Reactome" id="R-DDI-6791226">
    <property type="pathway name" value="Major pathway of rRNA processing in the nucleolus and cytosol"/>
</dbReference>
<dbReference type="PRO" id="PR:Q54S79"/>
<dbReference type="Proteomes" id="UP000002195">
    <property type="component" value="Chromosome 3"/>
</dbReference>
<dbReference type="GO" id="GO:0034388">
    <property type="term" value="C:Pwp2p-containing subcomplex of 90S preribosome"/>
    <property type="evidence" value="ECO:0000318"/>
    <property type="project" value="GO_Central"/>
</dbReference>
<dbReference type="GO" id="GO:0032040">
    <property type="term" value="C:small-subunit processome"/>
    <property type="evidence" value="ECO:0000318"/>
    <property type="project" value="GO_Central"/>
</dbReference>
<dbReference type="GO" id="GO:0030515">
    <property type="term" value="F:snoRNA binding"/>
    <property type="evidence" value="ECO:0000318"/>
    <property type="project" value="GO_Central"/>
</dbReference>
<dbReference type="GO" id="GO:0030490">
    <property type="term" value="P:maturation of SSU-rRNA"/>
    <property type="evidence" value="ECO:0000318"/>
    <property type="project" value="GO_Central"/>
</dbReference>
<dbReference type="CDD" id="cd00200">
    <property type="entry name" value="WD40"/>
    <property type="match status" value="2"/>
</dbReference>
<dbReference type="FunFam" id="2.130.10.10:FF:000157">
    <property type="entry name" value="WD repeat domain 3"/>
    <property type="match status" value="1"/>
</dbReference>
<dbReference type="FunFam" id="2.130.10.10:FF:000178">
    <property type="entry name" value="WD repeat domain 3"/>
    <property type="match status" value="1"/>
</dbReference>
<dbReference type="FunFam" id="2.130.10.10:FF:000843">
    <property type="entry name" value="WD repeat-containing protein 3 homolog"/>
    <property type="match status" value="1"/>
</dbReference>
<dbReference type="Gene3D" id="2.130.10.10">
    <property type="entry name" value="YVTN repeat-like/Quinoprotein amine dehydrogenase"/>
    <property type="match status" value="4"/>
</dbReference>
<dbReference type="InterPro" id="IPR020472">
    <property type="entry name" value="G-protein_beta_WD-40_rep"/>
</dbReference>
<dbReference type="InterPro" id="IPR011041">
    <property type="entry name" value="Quinoprot_gluc/sorb_DH_b-prop"/>
</dbReference>
<dbReference type="InterPro" id="IPR011047">
    <property type="entry name" value="Quinoprotein_ADH-like_sf"/>
</dbReference>
<dbReference type="InterPro" id="IPR007148">
    <property type="entry name" value="SSU_processome_Utp12"/>
</dbReference>
<dbReference type="InterPro" id="IPR051570">
    <property type="entry name" value="TBC1_cilium_biogenesis"/>
</dbReference>
<dbReference type="InterPro" id="IPR015943">
    <property type="entry name" value="WD40/YVTN_repeat-like_dom_sf"/>
</dbReference>
<dbReference type="InterPro" id="IPR019775">
    <property type="entry name" value="WD40_repeat_CS"/>
</dbReference>
<dbReference type="InterPro" id="IPR001680">
    <property type="entry name" value="WD40_rpt"/>
</dbReference>
<dbReference type="PANTHER" id="PTHR19853">
    <property type="entry name" value="WD REPEAT CONTAINING PROTEIN 3 WDR3"/>
    <property type="match status" value="1"/>
</dbReference>
<dbReference type="PANTHER" id="PTHR19853:SF0">
    <property type="entry name" value="WD REPEAT-CONTAINING PROTEIN 3"/>
    <property type="match status" value="1"/>
</dbReference>
<dbReference type="Pfam" id="PF25173">
    <property type="entry name" value="Beta-prop_WDR3_1st"/>
    <property type="match status" value="1"/>
</dbReference>
<dbReference type="Pfam" id="PF25172">
    <property type="entry name" value="Beta-prop_WDR3_2nd"/>
    <property type="match status" value="1"/>
</dbReference>
<dbReference type="Pfam" id="PF04003">
    <property type="entry name" value="Utp12"/>
    <property type="match status" value="1"/>
</dbReference>
<dbReference type="PRINTS" id="PR00320">
    <property type="entry name" value="GPROTEINBRPT"/>
</dbReference>
<dbReference type="SMART" id="SM00320">
    <property type="entry name" value="WD40"/>
    <property type="match status" value="12"/>
</dbReference>
<dbReference type="SUPFAM" id="SSF50998">
    <property type="entry name" value="Quinoprotein alcohol dehydrogenase-like"/>
    <property type="match status" value="1"/>
</dbReference>
<dbReference type="SUPFAM" id="SSF50952">
    <property type="entry name" value="Soluble quinoprotein glucose dehydrogenase"/>
    <property type="match status" value="1"/>
</dbReference>
<dbReference type="PROSITE" id="PS00678">
    <property type="entry name" value="WD_REPEATS_1"/>
    <property type="match status" value="3"/>
</dbReference>
<dbReference type="PROSITE" id="PS50082">
    <property type="entry name" value="WD_REPEATS_2"/>
    <property type="match status" value="9"/>
</dbReference>
<dbReference type="PROSITE" id="PS50294">
    <property type="entry name" value="WD_REPEATS_REGION"/>
    <property type="match status" value="1"/>
</dbReference>
<reference key="1">
    <citation type="journal article" date="2005" name="Nature">
        <title>The genome of the social amoeba Dictyostelium discoideum.</title>
        <authorList>
            <person name="Eichinger L."/>
            <person name="Pachebat J.A."/>
            <person name="Gloeckner G."/>
            <person name="Rajandream M.A."/>
            <person name="Sucgang R."/>
            <person name="Berriman M."/>
            <person name="Song J."/>
            <person name="Olsen R."/>
            <person name="Szafranski K."/>
            <person name="Xu Q."/>
            <person name="Tunggal B."/>
            <person name="Kummerfeld S."/>
            <person name="Madera M."/>
            <person name="Konfortov B.A."/>
            <person name="Rivero F."/>
            <person name="Bankier A.T."/>
            <person name="Lehmann R."/>
            <person name="Hamlin N."/>
            <person name="Davies R."/>
            <person name="Gaudet P."/>
            <person name="Fey P."/>
            <person name="Pilcher K."/>
            <person name="Chen G."/>
            <person name="Saunders D."/>
            <person name="Sodergren E.J."/>
            <person name="Davis P."/>
            <person name="Kerhornou A."/>
            <person name="Nie X."/>
            <person name="Hall N."/>
            <person name="Anjard C."/>
            <person name="Hemphill L."/>
            <person name="Bason N."/>
            <person name="Farbrother P."/>
            <person name="Desany B."/>
            <person name="Just E."/>
            <person name="Morio T."/>
            <person name="Rost R."/>
            <person name="Churcher C.M."/>
            <person name="Cooper J."/>
            <person name="Haydock S."/>
            <person name="van Driessche N."/>
            <person name="Cronin A."/>
            <person name="Goodhead I."/>
            <person name="Muzny D.M."/>
            <person name="Mourier T."/>
            <person name="Pain A."/>
            <person name="Lu M."/>
            <person name="Harper D."/>
            <person name="Lindsay R."/>
            <person name="Hauser H."/>
            <person name="James K.D."/>
            <person name="Quiles M."/>
            <person name="Madan Babu M."/>
            <person name="Saito T."/>
            <person name="Buchrieser C."/>
            <person name="Wardroper A."/>
            <person name="Felder M."/>
            <person name="Thangavelu M."/>
            <person name="Johnson D."/>
            <person name="Knights A."/>
            <person name="Loulseged H."/>
            <person name="Mungall K.L."/>
            <person name="Oliver K."/>
            <person name="Price C."/>
            <person name="Quail M.A."/>
            <person name="Urushihara H."/>
            <person name="Hernandez J."/>
            <person name="Rabbinowitsch E."/>
            <person name="Steffen D."/>
            <person name="Sanders M."/>
            <person name="Ma J."/>
            <person name="Kohara Y."/>
            <person name="Sharp S."/>
            <person name="Simmonds M.N."/>
            <person name="Spiegler S."/>
            <person name="Tivey A."/>
            <person name="Sugano S."/>
            <person name="White B."/>
            <person name="Walker D."/>
            <person name="Woodward J.R."/>
            <person name="Winckler T."/>
            <person name="Tanaka Y."/>
            <person name="Shaulsky G."/>
            <person name="Schleicher M."/>
            <person name="Weinstock G.M."/>
            <person name="Rosenthal A."/>
            <person name="Cox E.C."/>
            <person name="Chisholm R.L."/>
            <person name="Gibbs R.A."/>
            <person name="Loomis W.F."/>
            <person name="Platzer M."/>
            <person name="Kay R.R."/>
            <person name="Williams J.G."/>
            <person name="Dear P.H."/>
            <person name="Noegel A.A."/>
            <person name="Barrell B.G."/>
            <person name="Kuspa A."/>
        </authorList>
    </citation>
    <scope>NUCLEOTIDE SEQUENCE [LARGE SCALE GENOMIC DNA]</scope>
    <source>
        <strain>AX4</strain>
    </source>
</reference>
<comment type="subcellular location">
    <subcellularLocation>
        <location evidence="1">Nucleus</location>
        <location evidence="1">Nucleolus</location>
    </subcellularLocation>
</comment>
<comment type="similarity">
    <text evidence="3">Belongs to the WD repeat WDR3/UTP12 family.</text>
</comment>
<feature type="chain" id="PRO_0000330942" description="WD repeat-containing protein 3 homolog">
    <location>
        <begin position="1"/>
        <end position="942"/>
    </location>
</feature>
<feature type="repeat" description="WD 1">
    <location>
        <begin position="9"/>
        <end position="52"/>
    </location>
</feature>
<feature type="repeat" description="WD 2">
    <location>
        <begin position="57"/>
        <end position="96"/>
    </location>
</feature>
<feature type="repeat" description="WD 3">
    <location>
        <begin position="99"/>
        <end position="138"/>
    </location>
</feature>
<feature type="repeat" description="WD 4">
    <location>
        <begin position="141"/>
        <end position="180"/>
    </location>
</feature>
<feature type="repeat" description="WD 5">
    <location>
        <begin position="183"/>
        <end position="222"/>
    </location>
</feature>
<feature type="repeat" description="WD 6">
    <location>
        <begin position="285"/>
        <end position="324"/>
    </location>
</feature>
<feature type="repeat" description="WD 7">
    <location>
        <begin position="394"/>
        <end position="432"/>
    </location>
</feature>
<feature type="repeat" description="WD 8">
    <location>
        <begin position="434"/>
        <end position="472"/>
    </location>
</feature>
<feature type="repeat" description="WD 9">
    <location>
        <begin position="475"/>
        <end position="514"/>
    </location>
</feature>
<feature type="repeat" description="WD 10">
    <location>
        <begin position="529"/>
        <end position="568"/>
    </location>
</feature>
<feature type="repeat" description="WD 11">
    <location>
        <begin position="571"/>
        <end position="612"/>
    </location>
</feature>
<feature type="repeat" description="WD 12">
    <location>
        <begin position="613"/>
        <end position="652"/>
    </location>
</feature>
<feature type="repeat" description="WD 13">
    <location>
        <begin position="655"/>
        <end position="694"/>
    </location>
</feature>
<feature type="region of interest" description="Disordered" evidence="2">
    <location>
        <begin position="909"/>
        <end position="942"/>
    </location>
</feature>
<feature type="compositionally biased region" description="Basic and acidic residues" evidence="2">
    <location>
        <begin position="912"/>
        <end position="942"/>
    </location>
</feature>
<name>WDR3_DICDI</name>